<gene>
    <name evidence="1" type="primary">rpoY</name>
    <name type="ordered locus">BCQ_3765</name>
</gene>
<accession>B9IW56</accession>
<comment type="function">
    <text evidence="1">A non-essential component of RNA polymerase (RNAP).</text>
</comment>
<comment type="catalytic activity">
    <reaction evidence="1">
        <text>RNA(n) + a ribonucleoside 5'-triphosphate = RNA(n+1) + diphosphate</text>
        <dbReference type="Rhea" id="RHEA:21248"/>
        <dbReference type="Rhea" id="RHEA-COMP:14527"/>
        <dbReference type="Rhea" id="RHEA-COMP:17342"/>
        <dbReference type="ChEBI" id="CHEBI:33019"/>
        <dbReference type="ChEBI" id="CHEBI:61557"/>
        <dbReference type="ChEBI" id="CHEBI:140395"/>
        <dbReference type="EC" id="2.7.7.6"/>
    </reaction>
</comment>
<comment type="subunit">
    <text evidence="1">RNAP is composed of a core of 2 alpha, a beta and a beta' subunit. The core is associated with a delta subunit, and at least one of epsilon or omega. When a sigma factor is associated with the core the holoenzyme is formed, which can initiate transcription.</text>
</comment>
<comment type="similarity">
    <text evidence="1">Belongs to the RNA polymerase subunit epsilon family.</text>
</comment>
<sequence>MIFKVFYQEKMTEVPVRENTKVLYLEATSEKDVRTKLNKFAYNIEFVQSVTGNHLEYEKENADLTLAEIV</sequence>
<feature type="chain" id="PRO_1000185333" description="DNA-directed RNA polymerase subunit epsilon">
    <location>
        <begin position="1"/>
        <end position="70"/>
    </location>
</feature>
<dbReference type="EC" id="2.7.7.6" evidence="1"/>
<dbReference type="EMBL" id="CP000227">
    <property type="protein sequence ID" value="ACM14193.1"/>
    <property type="molecule type" value="Genomic_DNA"/>
</dbReference>
<dbReference type="SMR" id="B9IW56"/>
<dbReference type="KEGG" id="bcq:BCQ_3765"/>
<dbReference type="HOGENOM" id="CLU_187518_0_0_9"/>
<dbReference type="Proteomes" id="UP000000441">
    <property type="component" value="Chromosome"/>
</dbReference>
<dbReference type="GO" id="GO:0000428">
    <property type="term" value="C:DNA-directed RNA polymerase complex"/>
    <property type="evidence" value="ECO:0007669"/>
    <property type="project" value="UniProtKB-KW"/>
</dbReference>
<dbReference type="GO" id="GO:0003677">
    <property type="term" value="F:DNA binding"/>
    <property type="evidence" value="ECO:0007669"/>
    <property type="project" value="UniProtKB-UniRule"/>
</dbReference>
<dbReference type="GO" id="GO:0003899">
    <property type="term" value="F:DNA-directed RNA polymerase activity"/>
    <property type="evidence" value="ECO:0007669"/>
    <property type="project" value="UniProtKB-UniRule"/>
</dbReference>
<dbReference type="GO" id="GO:0006351">
    <property type="term" value="P:DNA-templated transcription"/>
    <property type="evidence" value="ECO:0007669"/>
    <property type="project" value="UniProtKB-UniRule"/>
</dbReference>
<dbReference type="Gene3D" id="3.10.20.730">
    <property type="entry name" value="RNAP, epsilon subunit-like"/>
    <property type="match status" value="1"/>
</dbReference>
<dbReference type="HAMAP" id="MF_01553">
    <property type="entry name" value="RNApol_bact_RpoY"/>
    <property type="match status" value="1"/>
</dbReference>
<dbReference type="InterPro" id="IPR009907">
    <property type="entry name" value="RpoY"/>
</dbReference>
<dbReference type="NCBIfam" id="NF010188">
    <property type="entry name" value="PRK13667.1"/>
    <property type="match status" value="1"/>
</dbReference>
<dbReference type="Pfam" id="PF07288">
    <property type="entry name" value="RpoY"/>
    <property type="match status" value="1"/>
</dbReference>
<organism>
    <name type="scientific">Bacillus cereus (strain Q1)</name>
    <dbReference type="NCBI Taxonomy" id="361100"/>
    <lineage>
        <taxon>Bacteria</taxon>
        <taxon>Bacillati</taxon>
        <taxon>Bacillota</taxon>
        <taxon>Bacilli</taxon>
        <taxon>Bacillales</taxon>
        <taxon>Bacillaceae</taxon>
        <taxon>Bacillus</taxon>
        <taxon>Bacillus cereus group</taxon>
    </lineage>
</organism>
<reference key="1">
    <citation type="journal article" date="2009" name="J. Bacteriol.">
        <title>Complete genome sequence of the extremophilic Bacillus cereus strain Q1 with industrial applications.</title>
        <authorList>
            <person name="Xiong Z."/>
            <person name="Jiang Y."/>
            <person name="Qi D."/>
            <person name="Lu H."/>
            <person name="Yang F."/>
            <person name="Yang J."/>
            <person name="Chen L."/>
            <person name="Sun L."/>
            <person name="Xu X."/>
            <person name="Xue Y."/>
            <person name="Zhu Y."/>
            <person name="Jin Q."/>
        </authorList>
    </citation>
    <scope>NUCLEOTIDE SEQUENCE [LARGE SCALE GENOMIC DNA]</scope>
    <source>
        <strain>Q1</strain>
    </source>
</reference>
<proteinExistence type="inferred from homology"/>
<evidence type="ECO:0000255" key="1">
    <source>
        <dbReference type="HAMAP-Rule" id="MF_01553"/>
    </source>
</evidence>
<name>RPOY_BACCQ</name>
<protein>
    <recommendedName>
        <fullName evidence="1">DNA-directed RNA polymerase subunit epsilon</fullName>
        <shortName evidence="1">RNAP epsilon subunit</shortName>
        <ecNumber evidence="1">2.7.7.6</ecNumber>
    </recommendedName>
    <alternativeName>
        <fullName evidence="1">RNA polymerase epsilon subunit</fullName>
    </alternativeName>
    <alternativeName>
        <fullName evidence="1">Transcriptase subunit epsilon</fullName>
    </alternativeName>
</protein>
<keyword id="KW-0240">DNA-directed RNA polymerase</keyword>
<keyword id="KW-0548">Nucleotidyltransferase</keyword>
<keyword id="KW-0804">Transcription</keyword>
<keyword id="KW-0808">Transferase</keyword>